<proteinExistence type="inferred from homology"/>
<gene>
    <name type="primary">NOP9</name>
    <name type="ordered locus">Pa_5_8630</name>
    <name type="ORF">PODANS_5_8630</name>
</gene>
<keyword id="KW-0539">Nucleus</keyword>
<keyword id="KW-1185">Reference proteome</keyword>
<keyword id="KW-0677">Repeat</keyword>
<keyword id="KW-0690">Ribosome biogenesis</keyword>
<keyword id="KW-0698">rRNA processing</keyword>
<protein>
    <recommendedName>
        <fullName>Nucleolar protein 9</fullName>
    </recommendedName>
    <alternativeName>
        <fullName>Pumilio domain-containing protein NOP9</fullName>
    </alternativeName>
</protein>
<accession>B2AL40</accession>
<accession>A0A090CNF7</accession>
<feature type="chain" id="PRO_0000407830" description="Nucleolar protein 9">
    <location>
        <begin position="1"/>
        <end position="834"/>
    </location>
</feature>
<feature type="repeat" description="Pumilio 1">
    <location>
        <begin position="145"/>
        <end position="180"/>
    </location>
</feature>
<feature type="repeat" description="Pumilio 2">
    <location>
        <begin position="181"/>
        <end position="216"/>
    </location>
</feature>
<feature type="repeat" description="Pumilio 3">
    <location>
        <begin position="250"/>
        <end position="290"/>
    </location>
</feature>
<feature type="repeat" description="Pumilio 4">
    <location>
        <begin position="630"/>
        <end position="666"/>
    </location>
</feature>
<feature type="region of interest" description="Disordered" evidence="2">
    <location>
        <begin position="1"/>
        <end position="54"/>
    </location>
</feature>
<feature type="region of interest" description="Disordered" evidence="2">
    <location>
        <begin position="749"/>
        <end position="834"/>
    </location>
</feature>
<feature type="compositionally biased region" description="Basic residues" evidence="2">
    <location>
        <begin position="1"/>
        <end position="10"/>
    </location>
</feature>
<feature type="compositionally biased region" description="Basic and acidic residues" evidence="2">
    <location>
        <begin position="38"/>
        <end position="47"/>
    </location>
</feature>
<feature type="compositionally biased region" description="Acidic residues" evidence="2">
    <location>
        <begin position="749"/>
        <end position="764"/>
    </location>
</feature>
<feature type="compositionally biased region" description="Basic residues" evidence="2">
    <location>
        <begin position="770"/>
        <end position="822"/>
    </location>
</feature>
<sequence>MGKNRKSKRQLIRDEKRAKKRGHENAEEEVRDAKRQRRTDGDEEHNADFIPLDGGNGDIPGFVIDTVGDKRRAHKYEGGEVEAEINGHGGDGGGGGGPGSFEREFFGMLAEEEQEYFRHADELLELNDFPSEEEKTIFLANVYKEAKGKELKLASSQSCSRLMERLILLSNTKQKKSMFDAFSGHFISLVTHRFASHCCEKLFLQSAPVVTQELAGEVPEEVPVEGQEEEELTENQKMSMEDLFLLTLDEFEEHLSFLLSDRYGSHALRVLLLVLAGRPLNQAGVKSLLQGKSKEYVTVEGAAANASELISQTRTVPSSFTAAIQKIIVDSTANLDGAALRVLAKHPTGNPTLQLLLDLELSMAPKGKKKAKKGEEEERQEEPVKETLLEKLVPGAPASFAEETSPACEFVNSMVYDPIGSRLLETLITHCPGKVFKGLHAHIFGPRIQSFLRNDIASYPAIKVLNRLSKEDLADAVEKSLPEFGALLEKGRLNVVRTYFERCHVRNATAQLDQLLQALTKACNNNWKHIVPKLCPLEEENEEDKSKEKKFQPAEVKNKTALLSHGCQIVSTLLSIPGNPAKAMQTSLLALPADKILRMATLNAHTAGIVTKALSTPPQLPHFHKLFVAAMLPNIIDMALTHHGNPIVCSIITMASKGDKDVPVVPFHLKENVMAKLEQRESQLRESWLGRNVWRSWKGDLWSNRRHDWVRWAKETNPEELRLAAAAGGAKTLEKQEEALKKRTEALQEEAFPEEMEEDQPEESEPVKVKKEKKEKKEKKEKKEKKEKKEKKEKKEKKEKKEKKEKKEKKEKKEKKEKKEKKPKVEEDAMEIDG</sequence>
<reference key="1">
    <citation type="journal article" date="2008" name="Genome Biol.">
        <title>The genome sequence of the model ascomycete fungus Podospora anserina.</title>
        <authorList>
            <person name="Espagne E."/>
            <person name="Lespinet O."/>
            <person name="Malagnac F."/>
            <person name="Da Silva C."/>
            <person name="Jaillon O."/>
            <person name="Porcel B.M."/>
            <person name="Couloux A."/>
            <person name="Aury J.-M."/>
            <person name="Segurens B."/>
            <person name="Poulain J."/>
            <person name="Anthouard V."/>
            <person name="Grossetete S."/>
            <person name="Khalili H."/>
            <person name="Coppin E."/>
            <person name="Dequard-Chablat M."/>
            <person name="Picard M."/>
            <person name="Contamine V."/>
            <person name="Arnaise S."/>
            <person name="Bourdais A."/>
            <person name="Berteaux-Lecellier V."/>
            <person name="Gautheret D."/>
            <person name="de Vries R.P."/>
            <person name="Battaglia E."/>
            <person name="Coutinho P.M."/>
            <person name="Danchin E.G.J."/>
            <person name="Henrissat B."/>
            <person name="El Khoury R."/>
            <person name="Sainsard-Chanet A."/>
            <person name="Boivin A."/>
            <person name="Pinan-Lucarre B."/>
            <person name="Sellem C.H."/>
            <person name="Debuchy R."/>
            <person name="Wincker P."/>
            <person name="Weissenbach J."/>
            <person name="Silar P."/>
        </authorList>
    </citation>
    <scope>NUCLEOTIDE SEQUENCE [LARGE SCALE GENOMIC DNA]</scope>
    <source>
        <strain>S / ATCC MYA-4624 / DSM 980 / FGSC 10383</strain>
    </source>
</reference>
<reference key="2">
    <citation type="journal article" date="2014" name="Genetics">
        <title>Maintaining two mating types: Structure of the mating type locus and its role in heterokaryosis in Podospora anserina.</title>
        <authorList>
            <person name="Grognet P."/>
            <person name="Bidard F."/>
            <person name="Kuchly C."/>
            <person name="Tong L.C.H."/>
            <person name="Coppin E."/>
            <person name="Benkhali J.A."/>
            <person name="Couloux A."/>
            <person name="Wincker P."/>
            <person name="Debuchy R."/>
            <person name="Silar P."/>
        </authorList>
    </citation>
    <scope>GENOME REANNOTATION</scope>
    <source>
        <strain>S / ATCC MYA-4624 / DSM 980 / FGSC 10383</strain>
    </source>
</reference>
<organism>
    <name type="scientific">Podospora anserina (strain S / ATCC MYA-4624 / DSM 980 / FGSC 10383)</name>
    <name type="common">Pleurage anserina</name>
    <dbReference type="NCBI Taxonomy" id="515849"/>
    <lineage>
        <taxon>Eukaryota</taxon>
        <taxon>Fungi</taxon>
        <taxon>Dikarya</taxon>
        <taxon>Ascomycota</taxon>
        <taxon>Pezizomycotina</taxon>
        <taxon>Sordariomycetes</taxon>
        <taxon>Sordariomycetidae</taxon>
        <taxon>Sordariales</taxon>
        <taxon>Podosporaceae</taxon>
        <taxon>Podospora</taxon>
        <taxon>Podospora anserina</taxon>
    </lineage>
</organism>
<comment type="function">
    <text evidence="1">RNA-binding nucleolar protein required for pre-rRNA processing. Involved in production of 18S rRNA and assembly of small ribosomal subunit (By similarity).</text>
</comment>
<comment type="subcellular location">
    <subcellularLocation>
        <location evidence="1">Nucleus</location>
        <location evidence="1">Nucleolus</location>
    </subcellularLocation>
</comment>
<comment type="similarity">
    <text evidence="3">Belongs to the NOP9 family.</text>
</comment>
<evidence type="ECO:0000250" key="1"/>
<evidence type="ECO:0000256" key="2">
    <source>
        <dbReference type="SAM" id="MobiDB-lite"/>
    </source>
</evidence>
<evidence type="ECO:0000305" key="3"/>
<dbReference type="EMBL" id="CU633865">
    <property type="protein sequence ID" value="CAP64588.1"/>
    <property type="molecule type" value="Genomic_DNA"/>
</dbReference>
<dbReference type="EMBL" id="FO904940">
    <property type="protein sequence ID" value="CDP29985.1"/>
    <property type="molecule type" value="Genomic_DNA"/>
</dbReference>
<dbReference type="RefSeq" id="XP_001904681.1">
    <property type="nucleotide sequence ID" value="XM_001904646.1"/>
</dbReference>
<dbReference type="SMR" id="B2AL40"/>
<dbReference type="FunCoup" id="B2AL40">
    <property type="interactions" value="884"/>
</dbReference>
<dbReference type="STRING" id="515849.B2AL40"/>
<dbReference type="GeneID" id="6188865"/>
<dbReference type="KEGG" id="pan:PODANSg1703"/>
<dbReference type="VEuPathDB" id="FungiDB:PODANS_5_8630"/>
<dbReference type="eggNOG" id="KOG2188">
    <property type="taxonomic scope" value="Eukaryota"/>
</dbReference>
<dbReference type="HOGENOM" id="CLU_008720_1_0_1"/>
<dbReference type="InParanoid" id="B2AL40"/>
<dbReference type="OrthoDB" id="392571at2759"/>
<dbReference type="Proteomes" id="UP000001197">
    <property type="component" value="Chromosome 5"/>
</dbReference>
<dbReference type="GO" id="GO:0030686">
    <property type="term" value="C:90S preribosome"/>
    <property type="evidence" value="ECO:0007669"/>
    <property type="project" value="TreeGrafter"/>
</dbReference>
<dbReference type="GO" id="GO:0005730">
    <property type="term" value="C:nucleolus"/>
    <property type="evidence" value="ECO:0007669"/>
    <property type="project" value="UniProtKB-SubCell"/>
</dbReference>
<dbReference type="GO" id="GO:0030688">
    <property type="term" value="C:preribosome, small subunit precursor"/>
    <property type="evidence" value="ECO:0007669"/>
    <property type="project" value="TreeGrafter"/>
</dbReference>
<dbReference type="GO" id="GO:0003723">
    <property type="term" value="F:RNA binding"/>
    <property type="evidence" value="ECO:0007669"/>
    <property type="project" value="InterPro"/>
</dbReference>
<dbReference type="GO" id="GO:0000480">
    <property type="term" value="P:endonucleolytic cleavage in 5'-ETS of tricistronic rRNA transcript (SSU-rRNA, 5.8S rRNA, LSU-rRNA)"/>
    <property type="evidence" value="ECO:0007669"/>
    <property type="project" value="TreeGrafter"/>
</dbReference>
<dbReference type="GO" id="GO:0000447">
    <property type="term" value="P:endonucleolytic cleavage in ITS1 to separate SSU-rRNA from 5.8S rRNA and LSU-rRNA from tricistronic rRNA transcript (SSU-rRNA, 5.8S rRNA, LSU-rRNA)"/>
    <property type="evidence" value="ECO:0007669"/>
    <property type="project" value="TreeGrafter"/>
</dbReference>
<dbReference type="GO" id="GO:0000472">
    <property type="term" value="P:endonucleolytic cleavage to generate mature 5'-end of SSU-rRNA from (SSU-rRNA, 5.8S rRNA, LSU-rRNA)"/>
    <property type="evidence" value="ECO:0007669"/>
    <property type="project" value="TreeGrafter"/>
</dbReference>
<dbReference type="GO" id="GO:0000056">
    <property type="term" value="P:ribosomal small subunit export from nucleus"/>
    <property type="evidence" value="ECO:0007669"/>
    <property type="project" value="TreeGrafter"/>
</dbReference>
<dbReference type="Gene3D" id="1.25.10.10">
    <property type="entry name" value="Leucine-rich Repeat Variant"/>
    <property type="match status" value="2"/>
</dbReference>
<dbReference type="InterPro" id="IPR011989">
    <property type="entry name" value="ARM-like"/>
</dbReference>
<dbReference type="InterPro" id="IPR016024">
    <property type="entry name" value="ARM-type_fold"/>
</dbReference>
<dbReference type="InterPro" id="IPR040000">
    <property type="entry name" value="NOP9"/>
</dbReference>
<dbReference type="InterPro" id="IPR001313">
    <property type="entry name" value="Pumilio_RNA-bd_rpt"/>
</dbReference>
<dbReference type="PANTHER" id="PTHR13102">
    <property type="entry name" value="NUCLEOLAR PROTEIN 9"/>
    <property type="match status" value="1"/>
</dbReference>
<dbReference type="PANTHER" id="PTHR13102:SF0">
    <property type="entry name" value="NUCLEOLAR PROTEIN 9"/>
    <property type="match status" value="1"/>
</dbReference>
<dbReference type="Pfam" id="PF22493">
    <property type="entry name" value="PUF_NOP9"/>
    <property type="match status" value="1"/>
</dbReference>
<dbReference type="SMART" id="SM00025">
    <property type="entry name" value="Pumilio"/>
    <property type="match status" value="6"/>
</dbReference>
<dbReference type="SUPFAM" id="SSF48371">
    <property type="entry name" value="ARM repeat"/>
    <property type="match status" value="1"/>
</dbReference>
<name>NOP9_PODAN</name>